<dbReference type="EMBL" id="CP000769">
    <property type="protein sequence ID" value="ABS26640.1"/>
    <property type="molecule type" value="Genomic_DNA"/>
</dbReference>
<dbReference type="RefSeq" id="WP_012097228.1">
    <property type="nucleotide sequence ID" value="NC_009675.1"/>
</dbReference>
<dbReference type="SMR" id="A7HD44"/>
<dbReference type="STRING" id="404589.Anae109_2439"/>
<dbReference type="KEGG" id="afw:Anae109_2439"/>
<dbReference type="eggNOG" id="COG0745">
    <property type="taxonomic scope" value="Bacteria"/>
</dbReference>
<dbReference type="eggNOG" id="COG4566">
    <property type="taxonomic scope" value="Bacteria"/>
</dbReference>
<dbReference type="HOGENOM" id="CLU_096477_0_0_7"/>
<dbReference type="OrthoDB" id="5507548at2"/>
<dbReference type="Proteomes" id="UP000006382">
    <property type="component" value="Chromosome"/>
</dbReference>
<dbReference type="GO" id="GO:0000160">
    <property type="term" value="P:phosphorelay signal transduction system"/>
    <property type="evidence" value="ECO:0007669"/>
    <property type="project" value="UniProtKB-KW"/>
</dbReference>
<dbReference type="CDD" id="cd00156">
    <property type="entry name" value="REC"/>
    <property type="match status" value="1"/>
</dbReference>
<dbReference type="Gene3D" id="3.40.50.2300">
    <property type="match status" value="2"/>
</dbReference>
<dbReference type="InterPro" id="IPR050595">
    <property type="entry name" value="Bact_response_regulator"/>
</dbReference>
<dbReference type="InterPro" id="IPR011006">
    <property type="entry name" value="CheY-like_superfamily"/>
</dbReference>
<dbReference type="InterPro" id="IPR001789">
    <property type="entry name" value="Sig_transdc_resp-reg_receiver"/>
</dbReference>
<dbReference type="PANTHER" id="PTHR44591:SF3">
    <property type="entry name" value="RESPONSE REGULATORY DOMAIN-CONTAINING PROTEIN"/>
    <property type="match status" value="1"/>
</dbReference>
<dbReference type="PANTHER" id="PTHR44591">
    <property type="entry name" value="STRESS RESPONSE REGULATOR PROTEIN 1"/>
    <property type="match status" value="1"/>
</dbReference>
<dbReference type="Pfam" id="PF00072">
    <property type="entry name" value="Response_reg"/>
    <property type="match status" value="2"/>
</dbReference>
<dbReference type="SMART" id="SM00448">
    <property type="entry name" value="REC"/>
    <property type="match status" value="2"/>
</dbReference>
<dbReference type="SUPFAM" id="SSF52172">
    <property type="entry name" value="CheY-like"/>
    <property type="match status" value="2"/>
</dbReference>
<dbReference type="PROSITE" id="PS50110">
    <property type="entry name" value="RESPONSE_REGULATORY"/>
    <property type="match status" value="2"/>
</dbReference>
<protein>
    <recommendedName>
        <fullName>Response regulator receiver protein Anae109_2439</fullName>
    </recommendedName>
</protein>
<feature type="chain" id="PRO_0000415893" description="Response regulator receiver protein Anae109_2439">
    <location>
        <begin position="1"/>
        <end position="238"/>
    </location>
</feature>
<feature type="domain" description="Response regulatory 1" evidence="1">
    <location>
        <begin position="3"/>
        <end position="117"/>
    </location>
</feature>
<feature type="domain" description="Response regulatory 2" evidence="1">
    <location>
        <begin position="121"/>
        <end position="228"/>
    </location>
</feature>
<feature type="modified residue" description="4-aspartylphosphate" evidence="1 2">
    <location>
        <position position="52"/>
    </location>
</feature>
<feature type="modified residue" description="4-aspartylphosphate" evidence="1 2">
    <location>
        <position position="169"/>
    </location>
</feature>
<feature type="mutagenesis site" description="Is monophosphorylated by GcHK, but not diphosphorylated. Is not phosphorylated at all; when associated with A-169." evidence="2">
    <original>D</original>
    <variation>A</variation>
    <location>
        <position position="52"/>
    </location>
</feature>
<feature type="mutagenesis site" description="Is monophosphorylated by GcHK, but not diphosphorylated. Is not phosphorylated at all; when associated with A-52." evidence="2">
    <original>D</original>
    <variation>A</variation>
    <location>
        <position position="169"/>
    </location>
</feature>
<name>Y2439_ANADF</name>
<accession>A7HD44</accession>
<proteinExistence type="evidence at protein level"/>
<comment type="function">
    <text evidence="2">Member of the two-component regulatory system GcHK/Anae109_2439. Is involved in a signal transduction system responding to oxygen availability.</text>
</comment>
<comment type="PTM">
    <text evidence="2">Is diphosphorylated by GchK.</text>
</comment>
<gene>
    <name type="ordered locus">Anae109_2439</name>
</gene>
<sequence>MRRYLIVDDNRDFAENLAEILRDGGDEVAIAENGQEALALARKTRFDALLTDMRMPLMGGAELVHELRRIDPGAAAMVITAHVADDALEAARREGLLAVLPKPVAVPRILDLLAAARRDGLVAVVEDDSRMSDNLCEALRGRGFAAVTAASVTETERLGPVEPFCALVDLRVPGGADGDALRRLRERFPGLPVIVVTGTHEVPPVPHQGYFTKPFDTAELLSAVERLHRERGQTVVPE</sequence>
<reference key="1">
    <citation type="journal article" date="2015" name="Genome Announc.">
        <title>Complete genome sequence of Anaeromyxobacter sp. Fw109-5, an anaerobic, metal-reducing bacterium isolated from a contaminated subsurface environment.</title>
        <authorList>
            <person name="Hwang C."/>
            <person name="Copeland A."/>
            <person name="Lucas S."/>
            <person name="Lapidus A."/>
            <person name="Barry K."/>
            <person name="Glavina Del Rio T."/>
            <person name="Dalin E."/>
            <person name="Tice H."/>
            <person name="Pitluck S."/>
            <person name="Sims D."/>
            <person name="Brettin T."/>
            <person name="Bruce D.C."/>
            <person name="Detter J.C."/>
            <person name="Han C.S."/>
            <person name="Schmutz J."/>
            <person name="Larimer F.W."/>
            <person name="Land M.L."/>
            <person name="Hauser L.J."/>
            <person name="Kyrpides N."/>
            <person name="Lykidis A."/>
            <person name="Richardson P."/>
            <person name="Belieav A."/>
            <person name="Sanford R.A."/>
            <person name="Loeffler F.E."/>
            <person name="Fields M.W."/>
        </authorList>
    </citation>
    <scope>NUCLEOTIDE SEQUENCE [LARGE SCALE GENOMIC DNA]</scope>
    <source>
        <strain>Fw109-5</strain>
    </source>
</reference>
<reference key="2">
    <citation type="journal article" date="2011" name="J. Biol. Chem.">
        <title>Identification and functional and spectral characterization of a globin-coupled histidine kinase from Anaeromyxobacter sp. Fw109-5.</title>
        <authorList>
            <person name="Kitanishi K."/>
            <person name="Kobayashi K."/>
            <person name="Uchida T."/>
            <person name="Ishimori K."/>
            <person name="Igarashi J."/>
            <person name="Shimizu T."/>
        </authorList>
    </citation>
    <scope>FUNCTION</scope>
    <scope>PTM</scope>
    <scope>PHOSPHORYLATION AT ASP-52 AND ASP-169 BY GCHK</scope>
    <scope>MUTAGENESIS OF ASP-52 AND ASP-169</scope>
    <source>
        <strain>Fw109-5</strain>
    </source>
</reference>
<organism>
    <name type="scientific">Anaeromyxobacter sp. (strain Fw109-5)</name>
    <dbReference type="NCBI Taxonomy" id="404589"/>
    <lineage>
        <taxon>Bacteria</taxon>
        <taxon>Pseudomonadati</taxon>
        <taxon>Myxococcota</taxon>
        <taxon>Myxococcia</taxon>
        <taxon>Myxococcales</taxon>
        <taxon>Cystobacterineae</taxon>
        <taxon>Anaeromyxobacteraceae</taxon>
        <taxon>Anaeromyxobacter</taxon>
    </lineage>
</organism>
<evidence type="ECO:0000255" key="1">
    <source>
        <dbReference type="PROSITE-ProRule" id="PRU00169"/>
    </source>
</evidence>
<evidence type="ECO:0000269" key="2">
    <source>
    </source>
</evidence>
<keyword id="KW-0597">Phosphoprotein</keyword>
<keyword id="KW-1185">Reference proteome</keyword>
<keyword id="KW-0677">Repeat</keyword>
<keyword id="KW-0902">Two-component regulatory system</keyword>